<sequence>MNAITSASAIRTVHVPLGERAYDILIGPGLIARAGAEIASRLKGRKAAVVTDENVAPLYLKALVASLDEAGIASAEVVLPAGEKTKSFEHLITACDKLLEARVERNDYVIALGGGVIGDLSGFAAGIVRRGVRFVQVPTSLLSQVDSSVGGKTGINSRHGKNLIGVFHQPDLVLADTDVLNSLSEREFRAGYAEVAKYGLIDKPDFFAWLEANWKSVFTGGSARIEAIAASCQAKADVVVADERENGQRALLNLGHTFGHALEAATAYDSSRLVHGEGVSIGMVLAYEFSARMNLASPDDARRVERHLKEVGLPTRMSDIPGDLPPAETLMDAIAQDKKVKSGKLTFILTRGIGQSFVADDVPASEVISFLREKHA</sequence>
<name>AROB_RHIJ3</name>
<keyword id="KW-0028">Amino-acid biosynthesis</keyword>
<keyword id="KW-0057">Aromatic amino acid biosynthesis</keyword>
<keyword id="KW-0170">Cobalt</keyword>
<keyword id="KW-0963">Cytoplasm</keyword>
<keyword id="KW-0456">Lyase</keyword>
<keyword id="KW-0479">Metal-binding</keyword>
<keyword id="KW-0520">NAD</keyword>
<keyword id="KW-0547">Nucleotide-binding</keyword>
<keyword id="KW-0862">Zinc</keyword>
<feature type="chain" id="PRO_1000094583" description="3-dehydroquinate synthase">
    <location>
        <begin position="1"/>
        <end position="376"/>
    </location>
</feature>
<feature type="binding site" evidence="1">
    <location>
        <begin position="115"/>
        <end position="119"/>
    </location>
    <ligand>
        <name>NAD(+)</name>
        <dbReference type="ChEBI" id="CHEBI:57540"/>
    </ligand>
</feature>
<feature type="binding site" evidence="1">
    <location>
        <begin position="139"/>
        <end position="140"/>
    </location>
    <ligand>
        <name>NAD(+)</name>
        <dbReference type="ChEBI" id="CHEBI:57540"/>
    </ligand>
</feature>
<feature type="binding site" evidence="1">
    <location>
        <position position="152"/>
    </location>
    <ligand>
        <name>NAD(+)</name>
        <dbReference type="ChEBI" id="CHEBI:57540"/>
    </ligand>
</feature>
<feature type="binding site" evidence="1">
    <location>
        <position position="161"/>
    </location>
    <ligand>
        <name>NAD(+)</name>
        <dbReference type="ChEBI" id="CHEBI:57540"/>
    </ligand>
</feature>
<feature type="binding site" evidence="1">
    <location>
        <position position="194"/>
    </location>
    <ligand>
        <name>Zn(2+)</name>
        <dbReference type="ChEBI" id="CHEBI:29105"/>
    </ligand>
</feature>
<feature type="binding site" evidence="1">
    <location>
        <position position="256"/>
    </location>
    <ligand>
        <name>Zn(2+)</name>
        <dbReference type="ChEBI" id="CHEBI:29105"/>
    </ligand>
</feature>
<feature type="binding site" evidence="1">
    <location>
        <position position="275"/>
    </location>
    <ligand>
        <name>Zn(2+)</name>
        <dbReference type="ChEBI" id="CHEBI:29105"/>
    </ligand>
</feature>
<comment type="function">
    <text evidence="1">Catalyzes the conversion of 3-deoxy-D-arabino-heptulosonate 7-phosphate (DAHP) to dehydroquinate (DHQ).</text>
</comment>
<comment type="catalytic activity">
    <reaction evidence="1">
        <text>7-phospho-2-dehydro-3-deoxy-D-arabino-heptonate = 3-dehydroquinate + phosphate</text>
        <dbReference type="Rhea" id="RHEA:21968"/>
        <dbReference type="ChEBI" id="CHEBI:32364"/>
        <dbReference type="ChEBI" id="CHEBI:43474"/>
        <dbReference type="ChEBI" id="CHEBI:58394"/>
        <dbReference type="EC" id="4.2.3.4"/>
    </reaction>
</comment>
<comment type="cofactor">
    <cofactor evidence="1">
        <name>Co(2+)</name>
        <dbReference type="ChEBI" id="CHEBI:48828"/>
    </cofactor>
    <cofactor evidence="1">
        <name>Zn(2+)</name>
        <dbReference type="ChEBI" id="CHEBI:29105"/>
    </cofactor>
    <text evidence="1">Binds 1 divalent metal cation per subunit. Can use either Co(2+) or Zn(2+).</text>
</comment>
<comment type="cofactor">
    <cofactor evidence="1">
        <name>NAD(+)</name>
        <dbReference type="ChEBI" id="CHEBI:57540"/>
    </cofactor>
</comment>
<comment type="pathway">
    <text evidence="1">Metabolic intermediate biosynthesis; chorismate biosynthesis; chorismate from D-erythrose 4-phosphate and phosphoenolpyruvate: step 2/7.</text>
</comment>
<comment type="subcellular location">
    <subcellularLocation>
        <location evidence="1">Cytoplasm</location>
    </subcellularLocation>
</comment>
<comment type="similarity">
    <text evidence="1">Belongs to the sugar phosphate cyclases superfamily. Dehydroquinate synthase family.</text>
</comment>
<accession>Q1MB46</accession>
<evidence type="ECO:0000255" key="1">
    <source>
        <dbReference type="HAMAP-Rule" id="MF_00110"/>
    </source>
</evidence>
<reference key="1">
    <citation type="journal article" date="2006" name="Genome Biol.">
        <title>The genome of Rhizobium leguminosarum has recognizable core and accessory components.</title>
        <authorList>
            <person name="Young J.P.W."/>
            <person name="Crossman L.C."/>
            <person name="Johnston A.W.B."/>
            <person name="Thomson N.R."/>
            <person name="Ghazoui Z.F."/>
            <person name="Hull K.H."/>
            <person name="Wexler M."/>
            <person name="Curson A.R.J."/>
            <person name="Todd J.D."/>
            <person name="Poole P.S."/>
            <person name="Mauchline T.H."/>
            <person name="East A.K."/>
            <person name="Quail M.A."/>
            <person name="Churcher C."/>
            <person name="Arrowsmith C."/>
            <person name="Cherevach I."/>
            <person name="Chillingworth T."/>
            <person name="Clarke K."/>
            <person name="Cronin A."/>
            <person name="Davis P."/>
            <person name="Fraser A."/>
            <person name="Hance Z."/>
            <person name="Hauser H."/>
            <person name="Jagels K."/>
            <person name="Moule S."/>
            <person name="Mungall K."/>
            <person name="Norbertczak H."/>
            <person name="Rabbinowitsch E."/>
            <person name="Sanders M."/>
            <person name="Simmonds M."/>
            <person name="Whitehead S."/>
            <person name="Parkhill J."/>
        </authorList>
    </citation>
    <scope>NUCLEOTIDE SEQUENCE [LARGE SCALE GENOMIC DNA]</scope>
    <source>
        <strain>DSM 114642 / LMG 32736 / 3841</strain>
    </source>
</reference>
<dbReference type="EC" id="4.2.3.4" evidence="1"/>
<dbReference type="EMBL" id="AM236080">
    <property type="protein sequence ID" value="CAK09839.1"/>
    <property type="molecule type" value="Genomic_DNA"/>
</dbReference>
<dbReference type="RefSeq" id="WP_011653734.1">
    <property type="nucleotide sequence ID" value="NC_008380.1"/>
</dbReference>
<dbReference type="SMR" id="Q1MB46"/>
<dbReference type="EnsemblBacteria" id="CAK09839">
    <property type="protein sequence ID" value="CAK09839"/>
    <property type="gene ID" value="RL4352"/>
</dbReference>
<dbReference type="KEGG" id="rle:RL4352"/>
<dbReference type="eggNOG" id="COG0337">
    <property type="taxonomic scope" value="Bacteria"/>
</dbReference>
<dbReference type="HOGENOM" id="CLU_001201_0_2_5"/>
<dbReference type="UniPathway" id="UPA00053">
    <property type="reaction ID" value="UER00085"/>
</dbReference>
<dbReference type="Proteomes" id="UP000006575">
    <property type="component" value="Chromosome"/>
</dbReference>
<dbReference type="GO" id="GO:0005737">
    <property type="term" value="C:cytoplasm"/>
    <property type="evidence" value="ECO:0007669"/>
    <property type="project" value="UniProtKB-SubCell"/>
</dbReference>
<dbReference type="GO" id="GO:0003856">
    <property type="term" value="F:3-dehydroquinate synthase activity"/>
    <property type="evidence" value="ECO:0007669"/>
    <property type="project" value="UniProtKB-UniRule"/>
</dbReference>
<dbReference type="GO" id="GO:0046872">
    <property type="term" value="F:metal ion binding"/>
    <property type="evidence" value="ECO:0007669"/>
    <property type="project" value="UniProtKB-KW"/>
</dbReference>
<dbReference type="GO" id="GO:0000166">
    <property type="term" value="F:nucleotide binding"/>
    <property type="evidence" value="ECO:0007669"/>
    <property type="project" value="UniProtKB-KW"/>
</dbReference>
<dbReference type="GO" id="GO:0008652">
    <property type="term" value="P:amino acid biosynthetic process"/>
    <property type="evidence" value="ECO:0007669"/>
    <property type="project" value="UniProtKB-KW"/>
</dbReference>
<dbReference type="GO" id="GO:0009073">
    <property type="term" value="P:aromatic amino acid family biosynthetic process"/>
    <property type="evidence" value="ECO:0007669"/>
    <property type="project" value="UniProtKB-KW"/>
</dbReference>
<dbReference type="GO" id="GO:0009423">
    <property type="term" value="P:chorismate biosynthetic process"/>
    <property type="evidence" value="ECO:0007669"/>
    <property type="project" value="UniProtKB-UniRule"/>
</dbReference>
<dbReference type="CDD" id="cd08195">
    <property type="entry name" value="DHQS"/>
    <property type="match status" value="1"/>
</dbReference>
<dbReference type="FunFam" id="3.40.50.1970:FF:000001">
    <property type="entry name" value="3-dehydroquinate synthase"/>
    <property type="match status" value="1"/>
</dbReference>
<dbReference type="Gene3D" id="3.40.50.1970">
    <property type="match status" value="1"/>
</dbReference>
<dbReference type="Gene3D" id="1.20.1090.10">
    <property type="entry name" value="Dehydroquinate synthase-like - alpha domain"/>
    <property type="match status" value="1"/>
</dbReference>
<dbReference type="HAMAP" id="MF_00110">
    <property type="entry name" value="DHQ_synthase"/>
    <property type="match status" value="1"/>
</dbReference>
<dbReference type="InterPro" id="IPR050071">
    <property type="entry name" value="Dehydroquinate_synthase"/>
</dbReference>
<dbReference type="InterPro" id="IPR016037">
    <property type="entry name" value="DHQ_synth_AroB"/>
</dbReference>
<dbReference type="InterPro" id="IPR030963">
    <property type="entry name" value="DHQ_synth_fam"/>
</dbReference>
<dbReference type="InterPro" id="IPR030960">
    <property type="entry name" value="DHQS/DOIS_N"/>
</dbReference>
<dbReference type="InterPro" id="IPR056179">
    <property type="entry name" value="DHQS_C"/>
</dbReference>
<dbReference type="NCBIfam" id="TIGR01357">
    <property type="entry name" value="aroB"/>
    <property type="match status" value="1"/>
</dbReference>
<dbReference type="PANTHER" id="PTHR43622">
    <property type="entry name" value="3-DEHYDROQUINATE SYNTHASE"/>
    <property type="match status" value="1"/>
</dbReference>
<dbReference type="PANTHER" id="PTHR43622:SF7">
    <property type="entry name" value="3-DEHYDROQUINATE SYNTHASE, CHLOROPLASTIC"/>
    <property type="match status" value="1"/>
</dbReference>
<dbReference type="Pfam" id="PF01761">
    <property type="entry name" value="DHQ_synthase"/>
    <property type="match status" value="1"/>
</dbReference>
<dbReference type="Pfam" id="PF24621">
    <property type="entry name" value="DHQS_C"/>
    <property type="match status" value="1"/>
</dbReference>
<dbReference type="PIRSF" id="PIRSF001455">
    <property type="entry name" value="DHQ_synth"/>
    <property type="match status" value="1"/>
</dbReference>
<dbReference type="SUPFAM" id="SSF56796">
    <property type="entry name" value="Dehydroquinate synthase-like"/>
    <property type="match status" value="1"/>
</dbReference>
<protein>
    <recommendedName>
        <fullName evidence="1">3-dehydroquinate synthase</fullName>
        <shortName evidence="1">DHQS</shortName>
        <ecNumber evidence="1">4.2.3.4</ecNumber>
    </recommendedName>
</protein>
<proteinExistence type="inferred from homology"/>
<gene>
    <name evidence="1" type="primary">aroB</name>
    <name type="ordered locus">RL4352</name>
</gene>
<organism>
    <name type="scientific">Rhizobium johnstonii (strain DSM 114642 / LMG 32736 / 3841)</name>
    <name type="common">Rhizobium leguminosarum bv. viciae</name>
    <dbReference type="NCBI Taxonomy" id="216596"/>
    <lineage>
        <taxon>Bacteria</taxon>
        <taxon>Pseudomonadati</taxon>
        <taxon>Pseudomonadota</taxon>
        <taxon>Alphaproteobacteria</taxon>
        <taxon>Hyphomicrobiales</taxon>
        <taxon>Rhizobiaceae</taxon>
        <taxon>Rhizobium/Agrobacterium group</taxon>
        <taxon>Rhizobium</taxon>
        <taxon>Rhizobium johnstonii</taxon>
    </lineage>
</organism>